<organism>
    <name type="scientific">Ictalurid herpesvirus 1 (strain Auburn)</name>
    <name type="common">IcHV-1</name>
    <name type="synonym">Channel catfish herpesvirus</name>
    <dbReference type="NCBI Taxonomy" id="766178"/>
    <lineage>
        <taxon>Viruses</taxon>
        <taxon>Duplodnaviria</taxon>
        <taxon>Heunggongvirae</taxon>
        <taxon>Peploviricota</taxon>
        <taxon>Herviviricetes</taxon>
        <taxon>Herpesvirales</taxon>
        <taxon>Alloherpesviridae</taxon>
        <taxon>Ictavirus</taxon>
        <taxon>Ictavirus ictaluridallo1</taxon>
        <taxon>Ictalurid herpesvirus 1</taxon>
    </lineage>
</organism>
<proteinExistence type="predicted"/>
<accession>Q00107</accession>
<dbReference type="EMBL" id="M75136">
    <property type="protein sequence ID" value="AAA88171.1"/>
    <property type="molecule type" value="Genomic_DNA"/>
</dbReference>
<dbReference type="PIR" id="D36793">
    <property type="entry name" value="D36793"/>
</dbReference>
<dbReference type="RefSeq" id="NP_041159.1">
    <property type="nucleotide sequence ID" value="NC_001493.2"/>
</dbReference>
<dbReference type="GeneID" id="1488444"/>
<dbReference type="KEGG" id="vg:1488444"/>
<dbReference type="Proteomes" id="UP000007643">
    <property type="component" value="Segment"/>
</dbReference>
<reference key="1">
    <citation type="journal article" date="1992" name="Virology">
        <title>Channel catfish virus: a new type of herpesvirus.</title>
        <authorList>
            <person name="Davison A.J."/>
        </authorList>
    </citation>
    <scope>NUCLEOTIDE SEQUENCE [LARGE SCALE GENOMIC DNA]</scope>
</reference>
<keyword id="KW-1185">Reference proteome</keyword>
<gene>
    <name type="primary">ORF67</name>
</gene>
<protein>
    <recommendedName>
        <fullName>Uncharacterized protein ORF67</fullName>
    </recommendedName>
</protein>
<sequence>MESIVYDSDFSDDEVSALTLDNLPYTRKRIISDRRLLRHFGGLTDVTPGITLSVPEPNSVVKPWLIFPVEKGVLSVEIITAGTVVNKDLVDGRGWIHETTCVTEPSLPSVNTITLGIVDFVSRSIVASGSEIFLLLTTDPGEGIGFKRMPCINTAGVTGAKISREVITDAPVVLYDDIYSLFHLTASLPRDVFLDCTGMTQAELERFAGLHLGSVPDWRYTPRKILISPPHYLTMNLTTLETWDSSDLLPPEPGFLQDVFIAAPSPKLRYTDDCMSAIKRTDTGVVIHGEPDVFFSFAENRVETLEFCAVDAPYPNPPQMSLVEDMTRKVVRTEAAIGTLTVELAPPDGVPEPLYSAEYVTVTHDRELRAYACVTSPALRTIVIGALGRNGVLHLLQHMELMVTMGFRDFRWKFREGNRELMYFVEAFIAAIPAPCAERMHVRIVLSRGHGSFRLWESGSHFRFRLMADPWSMSPNPRASNVVIRRPRQGVSLPPRRNPPRIIYEWTAMVRVTARTGALVSTRELTAEYRRALSITYNMIGDMLYIPVEPVLDGGGERLLDLPLLFTGFAFQWAEPPVVDSDAVSAGSRRAVIALHRLDYLEDAHVAVICSNVFMGTTACGAALQVAPADLPPGPFTVDLSVKPTDNPDVKLQQLTHRRNGFCGAYYDEAVTTGWFLGLLSGERMSIKDPSACLMSFYEKLHPIFLHGAKIGKCYVAHTFHPCTVDFVGCIVATSHMIQVADNVIIMARNPSSATCDTKFTIDSFNESVVRAIFKPENWIERYAQLFGPAYVMENTGHVVRFNGTGREVVKLTGIYPDTRTPGVQLVVTIDGREFVIIPLGFSPMLVIDGRIAWYDLTAPGILVTSTTNNWVVIAENSRKMIERPSYGMSYECYRIEDRSDDLPSCPPQGRFWRTGPRDILRDPIFEHMVQRAVDGHTTLRNTVGAVELFREIPGIINTWTSYRVVPDRGYVPVGATGAMAVSDAPMREQLMALTSDTELSFKYPRANWYSENILSLGHGAIIKWQTVIITRKPDDPPIAHGGVKITVLKEPLGLLNDTELRPGIYERRQIPWAHHLVVTDFRLLFGTLLIATTLHRYVHVIVDAHGAGEQILKMALEQAPLFNEPKRVVITGLPSSALPATIYLGAMDPRNIRVAVTGGQELKNSVRDKLAGVMRYVSGDDFDVGITDREFFYAITGTGRAVESFMLRDPARYIVELAPEGSLPVYRDPFNPIGEVTGRFWFDEVPNPIAILTDSETNVYMMSRGDIITPGERRVVDLPEYSAWTPERLQEEPPPTTFLGSGDVAIVTLRRRPPVGTRTKSLRLTIRNGVTMVLQRRDIVKVRLVDREAVKTSGLLVTSHSIGHTDDVYVPVAGGPLDYYAKIWSFHGLGGEEPCLDVVTPADCLAVAGAVRLFLVSLTHPVTFGCVNIVIPRALRPRFIRYFGTPIVMDRVLYDISIDRILTVGERDGDRRGVIHETRVNSDEWSRKLYFLKQRLISSGRHRKYWTERLTGTRLATHDNRWLGAAWLTVGDGTTRRLLSRENFIRCGRSTPQGQ</sequence>
<name>VG67_ICHVA</name>
<organismHost>
    <name type="scientific">Ictaluridae</name>
    <name type="common">bullhead catfishes</name>
    <dbReference type="NCBI Taxonomy" id="7996"/>
</organismHost>
<feature type="chain" id="PRO_0000222145" description="Uncharacterized protein ORF67">
    <location>
        <begin position="1"/>
        <end position="1556"/>
    </location>
</feature>